<feature type="chain" id="PRO_0000366299" description="UPF0735 ACT domain-containing protein CLB_3034">
    <location>
        <begin position="1"/>
        <end position="145"/>
    </location>
</feature>
<feature type="domain" description="ACT" evidence="1">
    <location>
        <begin position="69"/>
        <end position="144"/>
    </location>
</feature>
<organism>
    <name type="scientific">Clostridium botulinum (strain ATCC 19397 / Type A)</name>
    <dbReference type="NCBI Taxonomy" id="441770"/>
    <lineage>
        <taxon>Bacteria</taxon>
        <taxon>Bacillati</taxon>
        <taxon>Bacillota</taxon>
        <taxon>Clostridia</taxon>
        <taxon>Eubacteriales</taxon>
        <taxon>Clostridiaceae</taxon>
        <taxon>Clostridium</taxon>
    </lineage>
</organism>
<reference key="1">
    <citation type="journal article" date="2007" name="PLoS ONE">
        <title>Analysis of the neurotoxin complex genes in Clostridium botulinum A1-A4 and B1 strains: BoNT/A3, /Ba4 and /B1 clusters are located within plasmids.</title>
        <authorList>
            <person name="Smith T.J."/>
            <person name="Hill K.K."/>
            <person name="Foley B.T."/>
            <person name="Detter J.C."/>
            <person name="Munk A.C."/>
            <person name="Bruce D.C."/>
            <person name="Doggett N.A."/>
            <person name="Smith L.A."/>
            <person name="Marks J.D."/>
            <person name="Xie G."/>
            <person name="Brettin T.S."/>
        </authorList>
    </citation>
    <scope>NUCLEOTIDE SEQUENCE [LARGE SCALE GENOMIC DNA]</scope>
    <source>
        <strain>ATCC 19397 / Type A</strain>
    </source>
</reference>
<name>Y3034_CLOB1</name>
<gene>
    <name type="ordered locus">CLB_3034</name>
</gene>
<comment type="similarity">
    <text evidence="1">Belongs to the UPF0735 family.</text>
</comment>
<evidence type="ECO:0000255" key="1">
    <source>
        <dbReference type="HAMAP-Rule" id="MF_00707"/>
    </source>
</evidence>
<dbReference type="EMBL" id="CP000726">
    <property type="protein sequence ID" value="ABS32550.1"/>
    <property type="molecule type" value="Genomic_DNA"/>
</dbReference>
<dbReference type="RefSeq" id="WP_003357848.1">
    <property type="nucleotide sequence ID" value="NC_009697.1"/>
</dbReference>
<dbReference type="KEGG" id="cba:CLB_3034"/>
<dbReference type="HOGENOM" id="CLU_128147_0_0_9"/>
<dbReference type="CDD" id="cd04888">
    <property type="entry name" value="ACT_PheB-BS"/>
    <property type="match status" value="1"/>
</dbReference>
<dbReference type="Gene3D" id="3.30.70.260">
    <property type="match status" value="1"/>
</dbReference>
<dbReference type="HAMAP" id="MF_00707">
    <property type="entry name" value="UPF0735"/>
    <property type="match status" value="1"/>
</dbReference>
<dbReference type="InterPro" id="IPR045865">
    <property type="entry name" value="ACT-like_dom_sf"/>
</dbReference>
<dbReference type="InterPro" id="IPR002912">
    <property type="entry name" value="ACT_dom"/>
</dbReference>
<dbReference type="InterPro" id="IPR008310">
    <property type="entry name" value="UPF0735_ACT_dom-cont"/>
</dbReference>
<dbReference type="NCBIfam" id="NF003361">
    <property type="entry name" value="PRK04435.1"/>
    <property type="match status" value="1"/>
</dbReference>
<dbReference type="Pfam" id="PF13291">
    <property type="entry name" value="ACT_4"/>
    <property type="match status" value="1"/>
</dbReference>
<dbReference type="PIRSF" id="PIRSF025624">
    <property type="entry name" value="ACT_PheB"/>
    <property type="match status" value="1"/>
</dbReference>
<dbReference type="SUPFAM" id="SSF55021">
    <property type="entry name" value="ACT-like"/>
    <property type="match status" value="1"/>
</dbReference>
<dbReference type="PROSITE" id="PS51671">
    <property type="entry name" value="ACT"/>
    <property type="match status" value="1"/>
</dbReference>
<accession>A7FXW9</accession>
<sequence length="145" mass="16173">MPNKFLIIDNSILPDIFEKVVKVKELLANGKVKDITEGVKTVGISRSTYYKYKDFVFSVSEGVKSQKATIGLLLGHERGTLSKILDRIAEYQGNILTINQDIPINNTANVSITFDISQMSIGLKELVEEIKNTKNVIKVDLIAME</sequence>
<proteinExistence type="inferred from homology"/>
<protein>
    <recommendedName>
        <fullName evidence="1">UPF0735 ACT domain-containing protein CLB_3034</fullName>
    </recommendedName>
</protein>